<keyword id="KW-0007">Acetylation</keyword>
<keyword id="KW-0997">Cell inner membrane</keyword>
<keyword id="KW-1003">Cell membrane</keyword>
<keyword id="KW-0249">Electron transport</keyword>
<keyword id="KW-0274">FAD</keyword>
<keyword id="KW-0285">Flavoprotein</keyword>
<keyword id="KW-0472">Membrane</keyword>
<keyword id="KW-0560">Oxidoreductase</keyword>
<keyword id="KW-1185">Reference proteome</keyword>
<keyword id="KW-0813">Transport</keyword>
<keyword id="KW-0816">Tricarboxylic acid cycle</keyword>
<proteinExistence type="inferred from homology"/>
<accession>P0AC42</accession>
<accession>P10444</accession>
<accession>P78282</accession>
<dbReference type="EC" id="1.3.5.1" evidence="1"/>
<dbReference type="EMBL" id="AE014075">
    <property type="protein sequence ID" value="AAN79274.1"/>
    <property type="status" value="ALT_INIT"/>
    <property type="molecule type" value="Genomic_DNA"/>
</dbReference>
<dbReference type="RefSeq" id="WP_000775540.1">
    <property type="nucleotide sequence ID" value="NZ_CP051263.1"/>
</dbReference>
<dbReference type="SMR" id="P0AC42"/>
<dbReference type="STRING" id="199310.c0801"/>
<dbReference type="GeneID" id="93776761"/>
<dbReference type="KEGG" id="ecc:c0801"/>
<dbReference type="eggNOG" id="COG1053">
    <property type="taxonomic scope" value="Bacteria"/>
</dbReference>
<dbReference type="HOGENOM" id="CLU_014312_6_1_6"/>
<dbReference type="UniPathway" id="UPA00223">
    <property type="reaction ID" value="UER01005"/>
</dbReference>
<dbReference type="Proteomes" id="UP000001410">
    <property type="component" value="Chromosome"/>
</dbReference>
<dbReference type="GO" id="GO:0005886">
    <property type="term" value="C:plasma membrane"/>
    <property type="evidence" value="ECO:0007669"/>
    <property type="project" value="UniProtKB-SubCell"/>
</dbReference>
<dbReference type="GO" id="GO:0009055">
    <property type="term" value="F:electron transfer activity"/>
    <property type="evidence" value="ECO:0007669"/>
    <property type="project" value="TreeGrafter"/>
</dbReference>
<dbReference type="GO" id="GO:0050660">
    <property type="term" value="F:flavin adenine dinucleotide binding"/>
    <property type="evidence" value="ECO:0007669"/>
    <property type="project" value="InterPro"/>
</dbReference>
<dbReference type="GO" id="GO:0008177">
    <property type="term" value="F:succinate dehydrogenase (quinone) activity"/>
    <property type="evidence" value="ECO:0007669"/>
    <property type="project" value="UniProtKB-EC"/>
</dbReference>
<dbReference type="GO" id="GO:0009061">
    <property type="term" value="P:anaerobic respiration"/>
    <property type="evidence" value="ECO:0007669"/>
    <property type="project" value="TreeGrafter"/>
</dbReference>
<dbReference type="GO" id="GO:0022900">
    <property type="term" value="P:electron transport chain"/>
    <property type="evidence" value="ECO:0007669"/>
    <property type="project" value="InterPro"/>
</dbReference>
<dbReference type="GO" id="GO:0006099">
    <property type="term" value="P:tricarboxylic acid cycle"/>
    <property type="evidence" value="ECO:0007669"/>
    <property type="project" value="UniProtKB-UniPathway"/>
</dbReference>
<dbReference type="FunFam" id="3.90.700.10:FF:000001">
    <property type="entry name" value="Mitochondrial succinate dehydrogenase flavoprotein subunit"/>
    <property type="match status" value="1"/>
</dbReference>
<dbReference type="FunFam" id="4.10.80.40:FF:000001">
    <property type="entry name" value="Succinate dehydrogenase flavoprotein subunit"/>
    <property type="match status" value="1"/>
</dbReference>
<dbReference type="FunFam" id="1.20.58.100:FF:000001">
    <property type="entry name" value="Succinate dehydrogenase flavoprotein subunit (SdhA)"/>
    <property type="match status" value="1"/>
</dbReference>
<dbReference type="Gene3D" id="3.50.50.60">
    <property type="entry name" value="FAD/NAD(P)-binding domain"/>
    <property type="match status" value="1"/>
</dbReference>
<dbReference type="Gene3D" id="1.20.58.100">
    <property type="entry name" value="Fumarate reductase/succinate dehydrogenase flavoprotein-like, C-terminal domain"/>
    <property type="match status" value="1"/>
</dbReference>
<dbReference type="Gene3D" id="4.10.80.40">
    <property type="entry name" value="succinate dehydrogenase protein domain"/>
    <property type="match status" value="1"/>
</dbReference>
<dbReference type="Gene3D" id="3.90.700.10">
    <property type="entry name" value="Succinate dehydrogenase/fumarate reductase flavoprotein, catalytic domain"/>
    <property type="match status" value="1"/>
</dbReference>
<dbReference type="InterPro" id="IPR003953">
    <property type="entry name" value="FAD-dep_OxRdtase_2_FAD-bd"/>
</dbReference>
<dbReference type="InterPro" id="IPR036188">
    <property type="entry name" value="FAD/NAD-bd_sf"/>
</dbReference>
<dbReference type="InterPro" id="IPR003952">
    <property type="entry name" value="FRD_SDH_FAD_BS"/>
</dbReference>
<dbReference type="InterPro" id="IPR037099">
    <property type="entry name" value="Fum_R/Succ_DH_flav-like_C_sf"/>
</dbReference>
<dbReference type="InterPro" id="IPR015939">
    <property type="entry name" value="Fum_Rdtase/Succ_DH_flav-like_C"/>
</dbReference>
<dbReference type="InterPro" id="IPR030664">
    <property type="entry name" value="SdhA/FrdA/AprA"/>
</dbReference>
<dbReference type="InterPro" id="IPR027477">
    <property type="entry name" value="Succ_DH/fumarate_Rdtase_cat_sf"/>
</dbReference>
<dbReference type="InterPro" id="IPR011281">
    <property type="entry name" value="Succ_DH_flav_su_fwd"/>
</dbReference>
<dbReference type="InterPro" id="IPR014006">
    <property type="entry name" value="Succ_Dhase_FrdA_Gneg"/>
</dbReference>
<dbReference type="NCBIfam" id="TIGR01816">
    <property type="entry name" value="sdhA_forward"/>
    <property type="match status" value="1"/>
</dbReference>
<dbReference type="NCBIfam" id="TIGR01812">
    <property type="entry name" value="sdhA_frdA_Gneg"/>
    <property type="match status" value="1"/>
</dbReference>
<dbReference type="PANTHER" id="PTHR11632">
    <property type="entry name" value="SUCCINATE DEHYDROGENASE 2 FLAVOPROTEIN SUBUNIT"/>
    <property type="match status" value="1"/>
</dbReference>
<dbReference type="PANTHER" id="PTHR11632:SF51">
    <property type="entry name" value="SUCCINATE DEHYDROGENASE [UBIQUINONE] FLAVOPROTEIN SUBUNIT, MITOCHONDRIAL"/>
    <property type="match status" value="1"/>
</dbReference>
<dbReference type="Pfam" id="PF00890">
    <property type="entry name" value="FAD_binding_2"/>
    <property type="match status" value="1"/>
</dbReference>
<dbReference type="Pfam" id="PF02910">
    <property type="entry name" value="Succ_DH_flav_C"/>
    <property type="match status" value="1"/>
</dbReference>
<dbReference type="PIRSF" id="PIRSF000171">
    <property type="entry name" value="SDHA_APRA_LASPO"/>
    <property type="match status" value="1"/>
</dbReference>
<dbReference type="PRINTS" id="PR00368">
    <property type="entry name" value="FADPNR"/>
</dbReference>
<dbReference type="SUPFAM" id="SSF51905">
    <property type="entry name" value="FAD/NAD(P)-binding domain"/>
    <property type="match status" value="1"/>
</dbReference>
<dbReference type="SUPFAM" id="SSF46977">
    <property type="entry name" value="Succinate dehydrogenase/fumarate reductase flavoprotein C-terminal domain"/>
    <property type="match status" value="1"/>
</dbReference>
<dbReference type="SUPFAM" id="SSF56425">
    <property type="entry name" value="Succinate dehydrogenase/fumarate reductase flavoprotein, catalytic domain"/>
    <property type="match status" value="1"/>
</dbReference>
<dbReference type="PROSITE" id="PS00504">
    <property type="entry name" value="FRD_SDH_FAD_BINDING"/>
    <property type="match status" value="1"/>
</dbReference>
<comment type="function">
    <text evidence="1">Two distinct, membrane-bound, FAD-containing enzymes are responsible for the catalysis of fumarate and succinate interconversion; the fumarate reductase is used in anaerobic growth, and the succinate dehydrogenase is used in aerobic growth.</text>
</comment>
<comment type="catalytic activity">
    <reaction evidence="1">
        <text>a quinone + succinate = fumarate + a quinol</text>
        <dbReference type="Rhea" id="RHEA:40523"/>
        <dbReference type="ChEBI" id="CHEBI:24646"/>
        <dbReference type="ChEBI" id="CHEBI:29806"/>
        <dbReference type="ChEBI" id="CHEBI:30031"/>
        <dbReference type="ChEBI" id="CHEBI:132124"/>
        <dbReference type="EC" id="1.3.5.1"/>
    </reaction>
</comment>
<comment type="cofactor">
    <cofactor evidence="1">
        <name>FAD</name>
        <dbReference type="ChEBI" id="CHEBI:57692"/>
    </cofactor>
</comment>
<comment type="pathway">
    <text evidence="1">Carbohydrate metabolism; tricarboxylic acid cycle; fumarate from succinate (bacterial route): step 1/1.</text>
</comment>
<comment type="subunit">
    <text evidence="1">Part of an enzyme complex containing four subunits: a flavoprotein, an iron-sulfur, cytochrome b-556, and a hydrophobic anchor protein. The complex forms trimers.</text>
</comment>
<comment type="subcellular location">
    <subcellularLocation>
        <location evidence="1">Cell inner membrane</location>
        <topology evidence="1">Peripheral membrane protein</topology>
        <orientation evidence="1">Cytoplasmic side</orientation>
    </subcellularLocation>
</comment>
<comment type="similarity">
    <text evidence="2">Belongs to the FAD-dependent oxidoreductase 2 family. FRD/SDH subfamily.</text>
</comment>
<comment type="sequence caution" evidence="2">
    <conflict type="erroneous initiation">
        <sequence resource="EMBL-CDS" id="AAN79274"/>
    </conflict>
</comment>
<name>SDHA_ECOL6</name>
<feature type="chain" id="PRO_0000158654" description="Succinate dehydrogenase flavoprotein subunit">
    <location>
        <begin position="1"/>
        <end position="588"/>
    </location>
</feature>
<feature type="active site" description="Proton acceptor" evidence="1">
    <location>
        <position position="286"/>
    </location>
</feature>
<feature type="binding site" evidence="1">
    <location>
        <begin position="14"/>
        <end position="19"/>
    </location>
    <ligand>
        <name>FAD</name>
        <dbReference type="ChEBI" id="CHEBI:57692"/>
    </ligand>
</feature>
<feature type="binding site" evidence="1">
    <location>
        <begin position="37"/>
        <end position="52"/>
    </location>
    <ligand>
        <name>FAD</name>
        <dbReference type="ChEBI" id="CHEBI:57692"/>
    </ligand>
</feature>
<feature type="binding site" evidence="1">
    <location>
        <position position="221"/>
    </location>
    <ligand>
        <name>FAD</name>
        <dbReference type="ChEBI" id="CHEBI:57692"/>
    </ligand>
</feature>
<feature type="binding site" evidence="1">
    <location>
        <position position="242"/>
    </location>
    <ligand>
        <name>substrate</name>
    </ligand>
</feature>
<feature type="binding site" evidence="1">
    <location>
        <position position="254"/>
    </location>
    <ligand>
        <name>substrate</name>
    </ligand>
</feature>
<feature type="binding site" evidence="1">
    <location>
        <position position="354"/>
    </location>
    <ligand>
        <name>substrate</name>
    </ligand>
</feature>
<feature type="binding site" evidence="1">
    <location>
        <position position="388"/>
    </location>
    <ligand>
        <name>FAD</name>
        <dbReference type="ChEBI" id="CHEBI:57692"/>
    </ligand>
</feature>
<feature type="binding site" evidence="1">
    <location>
        <position position="399"/>
    </location>
    <ligand>
        <name>substrate</name>
    </ligand>
</feature>
<feature type="binding site" evidence="1">
    <location>
        <begin position="404"/>
        <end position="405"/>
    </location>
    <ligand>
        <name>FAD</name>
        <dbReference type="ChEBI" id="CHEBI:57692"/>
    </ligand>
</feature>
<feature type="modified residue" description="Tele-8alpha-FAD histidine" evidence="1">
    <location>
        <position position="45"/>
    </location>
</feature>
<feature type="modified residue" description="N6-acetyllysine" evidence="1">
    <location>
        <position position="267"/>
    </location>
</feature>
<organism>
    <name type="scientific">Escherichia coli O6:H1 (strain CFT073 / ATCC 700928 / UPEC)</name>
    <dbReference type="NCBI Taxonomy" id="199310"/>
    <lineage>
        <taxon>Bacteria</taxon>
        <taxon>Pseudomonadati</taxon>
        <taxon>Pseudomonadota</taxon>
        <taxon>Gammaproteobacteria</taxon>
        <taxon>Enterobacterales</taxon>
        <taxon>Enterobacteriaceae</taxon>
        <taxon>Escherichia</taxon>
    </lineage>
</organism>
<evidence type="ECO:0000250" key="1">
    <source>
        <dbReference type="UniProtKB" id="P0AC41"/>
    </source>
</evidence>
<evidence type="ECO:0000305" key="2"/>
<reference key="1">
    <citation type="journal article" date="2002" name="Proc. Natl. Acad. Sci. U.S.A.">
        <title>Extensive mosaic structure revealed by the complete genome sequence of uropathogenic Escherichia coli.</title>
        <authorList>
            <person name="Welch R.A."/>
            <person name="Burland V."/>
            <person name="Plunkett G. III"/>
            <person name="Redford P."/>
            <person name="Roesch P."/>
            <person name="Rasko D."/>
            <person name="Buckles E.L."/>
            <person name="Liou S.-R."/>
            <person name="Boutin A."/>
            <person name="Hackett J."/>
            <person name="Stroud D."/>
            <person name="Mayhew G.F."/>
            <person name="Rose D.J."/>
            <person name="Zhou S."/>
            <person name="Schwartz D.C."/>
            <person name="Perna N.T."/>
            <person name="Mobley H.L.T."/>
            <person name="Donnenberg M.S."/>
            <person name="Blattner F.R."/>
        </authorList>
    </citation>
    <scope>NUCLEOTIDE SEQUENCE [LARGE SCALE GENOMIC DNA]</scope>
    <source>
        <strain>CFT073 / ATCC 700928 / UPEC</strain>
    </source>
</reference>
<sequence length="588" mass="64422">MKLPVREFDAVVIGAGGAGMRAALQISQSGQTCALLSKVFPTRSHTVSAQGGITVALGNTHEDNWEWHMYDTVKGSDYIGDQDAIEYMCKTGPEAILELEHMGLPFSRLDDGRIYQRPFGGQSKNFGGEQAARTAAAADRTGHALLHTLYQQNLKNHTTIFSEWYALDLVKNQDGAVVGCTALCIETGEVVYFKARATVLATGGAGRIYQSTTNAHINTGDGVGMAIRAGVPVQDMEMWQFHPTGIAGAGVLVTEGCRGEGGYLLNKHGERFMERYAPNAKDLAGRDVVARSIMIEIREGRGCDGPWGPHAKLKLDHLGKEVLESRLPGILELSRTFAHVDPVKEPIPVIPTCHYMMGGIPTKVTGQALTVNEKGEDVVVPGLFAVGEIACVSVHGANRLGGNSLLDLVVFGRAAGLHLQESIAEQGALRDASESDVEASLDRLNRWNNNRNGEDPVAIRKALQECMQHNFSVFREGDAMAKGLEQLKVIRERLKNARLDDTSSEFNTQRVECLELDNLMETAYATAVSANFRTESRGAHSRFDFPDRDDENWLCHSLYLPESESMTRRSVNMEPKLRPAFPPKIRTY</sequence>
<gene>
    <name type="primary">sdhA</name>
    <name type="ordered locus">c0801</name>
</gene>
<protein>
    <recommendedName>
        <fullName>Succinate dehydrogenase flavoprotein subunit</fullName>
        <ecNumber evidence="1">1.3.5.1</ecNumber>
    </recommendedName>
</protein>